<reference key="1">
    <citation type="journal article" date="2000" name="Nature">
        <title>Complete DNA sequence of a serogroup A strain of Neisseria meningitidis Z2491.</title>
        <authorList>
            <person name="Parkhill J."/>
            <person name="Achtman M."/>
            <person name="James K.D."/>
            <person name="Bentley S.D."/>
            <person name="Churcher C.M."/>
            <person name="Klee S.R."/>
            <person name="Morelli G."/>
            <person name="Basham D."/>
            <person name="Brown D."/>
            <person name="Chillingworth T."/>
            <person name="Davies R.M."/>
            <person name="Davis P."/>
            <person name="Devlin K."/>
            <person name="Feltwell T."/>
            <person name="Hamlin N."/>
            <person name="Holroyd S."/>
            <person name="Jagels K."/>
            <person name="Leather S."/>
            <person name="Moule S."/>
            <person name="Mungall K.L."/>
            <person name="Quail M.A."/>
            <person name="Rajandream M.A."/>
            <person name="Rutherford K.M."/>
            <person name="Simmonds M."/>
            <person name="Skelton J."/>
            <person name="Whitehead S."/>
            <person name="Spratt B.G."/>
            <person name="Barrell B.G."/>
        </authorList>
    </citation>
    <scope>NUCLEOTIDE SEQUENCE [LARGE SCALE GENOMIC DNA]</scope>
    <source>
        <strain>DSM 15465 / Z2491</strain>
    </source>
</reference>
<sequence length="196" mass="21781">MGLELPLILGTSSVFRREQMERLGIAFQAASPDFDETPMLGESAPQTALRLAEGKARSLAGRFPEALIVGADQVAWCDGRQWGKPMNLANAQKMLMHLSGREIEFYSAVVLLNTVTGRMQRHIDKTVVVMRKLDELHILRYLEREPDAVYCSCALKSEALGALLIERIESTDPNALIGLPVFRLVDFLKNEGVDVL</sequence>
<name>NTPPB_NEIMA</name>
<organism>
    <name type="scientific">Neisseria meningitidis serogroup A / serotype 4A (strain DSM 15465 / Z2491)</name>
    <dbReference type="NCBI Taxonomy" id="122587"/>
    <lineage>
        <taxon>Bacteria</taxon>
        <taxon>Pseudomonadati</taxon>
        <taxon>Pseudomonadota</taxon>
        <taxon>Betaproteobacteria</taxon>
        <taxon>Neisseriales</taxon>
        <taxon>Neisseriaceae</taxon>
        <taxon>Neisseria</taxon>
    </lineage>
</organism>
<accession>Q9JW50</accession>
<accession>A1IPZ7</accession>
<proteinExistence type="inferred from homology"/>
<gene>
    <name type="ordered locus">NMA0546</name>
</gene>
<dbReference type="EC" id="3.6.1.-" evidence="1"/>
<dbReference type="EMBL" id="AL157959">
    <property type="protein sequence ID" value="CAM07822.1"/>
    <property type="molecule type" value="Genomic_DNA"/>
</dbReference>
<dbReference type="PIR" id="B81973">
    <property type="entry name" value="B81973"/>
</dbReference>
<dbReference type="RefSeq" id="WP_002246446.1">
    <property type="nucleotide sequence ID" value="NC_003116.1"/>
</dbReference>
<dbReference type="SMR" id="Q9JW50"/>
<dbReference type="EnsemblBacteria" id="CAM07822">
    <property type="protein sequence ID" value="CAM07822"/>
    <property type="gene ID" value="NMA0546"/>
</dbReference>
<dbReference type="KEGG" id="nma:NMA0546"/>
<dbReference type="HOGENOM" id="CLU_040416_1_0_4"/>
<dbReference type="Proteomes" id="UP000000626">
    <property type="component" value="Chromosome"/>
</dbReference>
<dbReference type="GO" id="GO:0005737">
    <property type="term" value="C:cytoplasm"/>
    <property type="evidence" value="ECO:0007669"/>
    <property type="project" value="UniProtKB-SubCell"/>
</dbReference>
<dbReference type="GO" id="GO:0047429">
    <property type="term" value="F:nucleoside triphosphate diphosphatase activity"/>
    <property type="evidence" value="ECO:0007669"/>
    <property type="project" value="InterPro"/>
</dbReference>
<dbReference type="GO" id="GO:0009117">
    <property type="term" value="P:nucleotide metabolic process"/>
    <property type="evidence" value="ECO:0007669"/>
    <property type="project" value="UniProtKB-KW"/>
</dbReference>
<dbReference type="CDD" id="cd00555">
    <property type="entry name" value="Maf"/>
    <property type="match status" value="1"/>
</dbReference>
<dbReference type="Gene3D" id="3.90.950.10">
    <property type="match status" value="1"/>
</dbReference>
<dbReference type="HAMAP" id="MF_00528">
    <property type="entry name" value="Maf"/>
    <property type="match status" value="1"/>
</dbReference>
<dbReference type="InterPro" id="IPR029001">
    <property type="entry name" value="ITPase-like_fam"/>
</dbReference>
<dbReference type="InterPro" id="IPR003697">
    <property type="entry name" value="Maf-like"/>
</dbReference>
<dbReference type="NCBIfam" id="TIGR00172">
    <property type="entry name" value="maf"/>
    <property type="match status" value="1"/>
</dbReference>
<dbReference type="PANTHER" id="PTHR43213">
    <property type="entry name" value="BIFUNCTIONAL DTTP/UTP PYROPHOSPHATASE/METHYLTRANSFERASE PROTEIN-RELATED"/>
    <property type="match status" value="1"/>
</dbReference>
<dbReference type="PANTHER" id="PTHR43213:SF5">
    <property type="entry name" value="BIFUNCTIONAL DTTP_UTP PYROPHOSPHATASE_METHYLTRANSFERASE PROTEIN-RELATED"/>
    <property type="match status" value="1"/>
</dbReference>
<dbReference type="Pfam" id="PF02545">
    <property type="entry name" value="Maf"/>
    <property type="match status" value="1"/>
</dbReference>
<dbReference type="PIRSF" id="PIRSF006305">
    <property type="entry name" value="Maf"/>
    <property type="match status" value="1"/>
</dbReference>
<dbReference type="SUPFAM" id="SSF52972">
    <property type="entry name" value="ITPase-like"/>
    <property type="match status" value="1"/>
</dbReference>
<comment type="function">
    <text evidence="1">Nucleoside triphosphate pyrophosphatase that hydrolyzes 7-methyl-GTP (m(7)GTP). May have a dual role in cell division arrest and in preventing the incorporation of modified nucleotides into cellular nucleic acids.</text>
</comment>
<comment type="catalytic activity">
    <reaction evidence="1">
        <text>N(7)-methyl-GTP + H2O = N(7)-methyl-GMP + diphosphate + H(+)</text>
        <dbReference type="Rhea" id="RHEA:58744"/>
        <dbReference type="ChEBI" id="CHEBI:15377"/>
        <dbReference type="ChEBI" id="CHEBI:15378"/>
        <dbReference type="ChEBI" id="CHEBI:33019"/>
        <dbReference type="ChEBI" id="CHEBI:58285"/>
        <dbReference type="ChEBI" id="CHEBI:87133"/>
    </reaction>
</comment>
<comment type="cofactor">
    <cofactor evidence="1">
        <name>a divalent metal cation</name>
        <dbReference type="ChEBI" id="CHEBI:60240"/>
    </cofactor>
</comment>
<comment type="subcellular location">
    <subcellularLocation>
        <location evidence="1">Cytoplasm</location>
    </subcellularLocation>
</comment>
<comment type="similarity">
    <text evidence="1">Belongs to the Maf family. YceF subfamily.</text>
</comment>
<evidence type="ECO:0000255" key="1">
    <source>
        <dbReference type="HAMAP-Rule" id="MF_00528"/>
    </source>
</evidence>
<protein>
    <recommendedName>
        <fullName evidence="1">7-methyl-GTP pyrophosphatase</fullName>
        <shortName evidence="1">m(7)GTP pyrophosphatase</shortName>
        <ecNumber evidence="1">3.6.1.-</ecNumber>
    </recommendedName>
</protein>
<keyword id="KW-0963">Cytoplasm</keyword>
<keyword id="KW-0378">Hydrolase</keyword>
<keyword id="KW-0546">Nucleotide metabolism</keyword>
<feature type="chain" id="PRO_0000123031" description="7-methyl-GTP pyrophosphatase">
    <location>
        <begin position="1"/>
        <end position="196"/>
    </location>
</feature>
<feature type="active site" description="Proton acceptor" evidence="1">
    <location>
        <position position="72"/>
    </location>
</feature>
<feature type="site" description="Important for substrate specificity" evidence="1">
    <location>
        <position position="15"/>
    </location>
</feature>
<feature type="site" description="Important for substrate specificity" evidence="1">
    <location>
        <position position="73"/>
    </location>
</feature>
<feature type="site" description="Important for substrate specificity" evidence="1">
    <location>
        <position position="158"/>
    </location>
</feature>